<proteinExistence type="evidence at transcript level"/>
<accession>P58182</accession>
<accession>B0S862</accession>
<accession>Q5SUN9</accession>
<accession>Q6IET9</accession>
<evidence type="ECO:0000255" key="1"/>
<evidence type="ECO:0000255" key="2">
    <source>
        <dbReference type="PROSITE-ProRule" id="PRU00521"/>
    </source>
</evidence>
<evidence type="ECO:0000269" key="3">
    <source>
    </source>
</evidence>
<evidence type="ECO:0000269" key="4">
    <source>
    </source>
</evidence>
<evidence type="ECO:0000269" key="5">
    <source ref="1"/>
</evidence>
<evidence type="ECO:0000269" key="6">
    <source ref="3"/>
</evidence>
<evidence type="ECO:0000305" key="7"/>
<keyword id="KW-1003">Cell membrane</keyword>
<keyword id="KW-1015">Disulfide bond</keyword>
<keyword id="KW-0297">G-protein coupled receptor</keyword>
<keyword id="KW-0325">Glycoprotein</keyword>
<keyword id="KW-0472">Membrane</keyword>
<keyword id="KW-0552">Olfaction</keyword>
<keyword id="KW-0675">Receptor</keyword>
<keyword id="KW-1185">Reference proteome</keyword>
<keyword id="KW-0716">Sensory transduction</keyword>
<keyword id="KW-0807">Transducer</keyword>
<keyword id="KW-0812">Transmembrane</keyword>
<keyword id="KW-1133">Transmembrane helix</keyword>
<gene>
    <name type="primary">OR12D2</name>
</gene>
<reference key="1">
    <citation type="submission" date="1998-02" db="EMBL/GenBank/DDBJ databases">
        <title>Large scale sequence analysis of the human MHC class I region.</title>
        <authorList>
            <person name="Janer M.M."/>
            <person name="Guillaudeux T."/>
            <person name="Vu Q."/>
            <person name="Kutyavin T."/>
            <person name="Harter H."/>
            <person name="Geraghty D.E."/>
        </authorList>
    </citation>
    <scope>NUCLEOTIDE SEQUENCE [GENOMIC DNA]</scope>
    <scope>VARIANT PHE-104</scope>
</reference>
<reference key="2">
    <citation type="journal article" date="2003" name="Nature">
        <title>The DNA sequence and analysis of human chromosome 6.</title>
        <authorList>
            <person name="Mungall A.J."/>
            <person name="Palmer S.A."/>
            <person name="Sims S.K."/>
            <person name="Edwards C.A."/>
            <person name="Ashurst J.L."/>
            <person name="Wilming L."/>
            <person name="Jones M.C."/>
            <person name="Horton R."/>
            <person name="Hunt S.E."/>
            <person name="Scott C.E."/>
            <person name="Gilbert J.G.R."/>
            <person name="Clamp M.E."/>
            <person name="Bethel G."/>
            <person name="Milne S."/>
            <person name="Ainscough R."/>
            <person name="Almeida J.P."/>
            <person name="Ambrose K.D."/>
            <person name="Andrews T.D."/>
            <person name="Ashwell R.I.S."/>
            <person name="Babbage A.K."/>
            <person name="Bagguley C.L."/>
            <person name="Bailey J."/>
            <person name="Banerjee R."/>
            <person name="Barker D.J."/>
            <person name="Barlow K.F."/>
            <person name="Bates K."/>
            <person name="Beare D.M."/>
            <person name="Beasley H."/>
            <person name="Beasley O."/>
            <person name="Bird C.P."/>
            <person name="Blakey S.E."/>
            <person name="Bray-Allen S."/>
            <person name="Brook J."/>
            <person name="Brown A.J."/>
            <person name="Brown J.Y."/>
            <person name="Burford D.C."/>
            <person name="Burrill W."/>
            <person name="Burton J."/>
            <person name="Carder C."/>
            <person name="Carter N.P."/>
            <person name="Chapman J.C."/>
            <person name="Clark S.Y."/>
            <person name="Clark G."/>
            <person name="Clee C.M."/>
            <person name="Clegg S."/>
            <person name="Cobley V."/>
            <person name="Collier R.E."/>
            <person name="Collins J.E."/>
            <person name="Colman L.K."/>
            <person name="Corby N.R."/>
            <person name="Coville G.J."/>
            <person name="Culley K.M."/>
            <person name="Dhami P."/>
            <person name="Davies J."/>
            <person name="Dunn M."/>
            <person name="Earthrowl M.E."/>
            <person name="Ellington A.E."/>
            <person name="Evans K.A."/>
            <person name="Faulkner L."/>
            <person name="Francis M.D."/>
            <person name="Frankish A."/>
            <person name="Frankland J."/>
            <person name="French L."/>
            <person name="Garner P."/>
            <person name="Garnett J."/>
            <person name="Ghori M.J."/>
            <person name="Gilby L.M."/>
            <person name="Gillson C.J."/>
            <person name="Glithero R.J."/>
            <person name="Grafham D.V."/>
            <person name="Grant M."/>
            <person name="Gribble S."/>
            <person name="Griffiths C."/>
            <person name="Griffiths M.N.D."/>
            <person name="Hall R."/>
            <person name="Halls K.S."/>
            <person name="Hammond S."/>
            <person name="Harley J.L."/>
            <person name="Hart E.A."/>
            <person name="Heath P.D."/>
            <person name="Heathcott R."/>
            <person name="Holmes S.J."/>
            <person name="Howden P.J."/>
            <person name="Howe K.L."/>
            <person name="Howell G.R."/>
            <person name="Huckle E."/>
            <person name="Humphray S.J."/>
            <person name="Humphries M.D."/>
            <person name="Hunt A.R."/>
            <person name="Johnson C.M."/>
            <person name="Joy A.A."/>
            <person name="Kay M."/>
            <person name="Keenan S.J."/>
            <person name="Kimberley A.M."/>
            <person name="King A."/>
            <person name="Laird G.K."/>
            <person name="Langford C."/>
            <person name="Lawlor S."/>
            <person name="Leongamornlert D.A."/>
            <person name="Leversha M."/>
            <person name="Lloyd C.R."/>
            <person name="Lloyd D.M."/>
            <person name="Loveland J.E."/>
            <person name="Lovell J."/>
            <person name="Martin S."/>
            <person name="Mashreghi-Mohammadi M."/>
            <person name="Maslen G.L."/>
            <person name="Matthews L."/>
            <person name="McCann O.T."/>
            <person name="McLaren S.J."/>
            <person name="McLay K."/>
            <person name="McMurray A."/>
            <person name="Moore M.J.F."/>
            <person name="Mullikin J.C."/>
            <person name="Niblett D."/>
            <person name="Nickerson T."/>
            <person name="Novik K.L."/>
            <person name="Oliver K."/>
            <person name="Overton-Larty E.K."/>
            <person name="Parker A."/>
            <person name="Patel R."/>
            <person name="Pearce A.V."/>
            <person name="Peck A.I."/>
            <person name="Phillimore B.J.C.T."/>
            <person name="Phillips S."/>
            <person name="Plumb R.W."/>
            <person name="Porter K.M."/>
            <person name="Ramsey Y."/>
            <person name="Ranby S.A."/>
            <person name="Rice C.M."/>
            <person name="Ross M.T."/>
            <person name="Searle S.M."/>
            <person name="Sehra H.K."/>
            <person name="Sheridan E."/>
            <person name="Skuce C.D."/>
            <person name="Smith S."/>
            <person name="Smith M."/>
            <person name="Spraggon L."/>
            <person name="Squares S.L."/>
            <person name="Steward C.A."/>
            <person name="Sycamore N."/>
            <person name="Tamlyn-Hall G."/>
            <person name="Tester J."/>
            <person name="Theaker A.J."/>
            <person name="Thomas D.W."/>
            <person name="Thorpe A."/>
            <person name="Tracey A."/>
            <person name="Tromans A."/>
            <person name="Tubby B."/>
            <person name="Wall M."/>
            <person name="Wallis J.M."/>
            <person name="West A.P."/>
            <person name="White S.S."/>
            <person name="Whitehead S.L."/>
            <person name="Whittaker H."/>
            <person name="Wild A."/>
            <person name="Willey D.J."/>
            <person name="Wilmer T.E."/>
            <person name="Wood J.M."/>
            <person name="Wray P.W."/>
            <person name="Wyatt J.C."/>
            <person name="Young L."/>
            <person name="Younger R.M."/>
            <person name="Bentley D.R."/>
            <person name="Coulson A."/>
            <person name="Durbin R.M."/>
            <person name="Hubbard T."/>
            <person name="Sulston J.E."/>
            <person name="Dunham I."/>
            <person name="Rogers J."/>
            <person name="Beck S."/>
        </authorList>
    </citation>
    <scope>NUCLEOTIDE SEQUENCE [LARGE SCALE GENOMIC DNA]</scope>
    <scope>VARIANT PHE-104</scope>
</reference>
<reference key="3">
    <citation type="submission" date="2005-07" db="EMBL/GenBank/DDBJ databases">
        <authorList>
            <person name="Mural R.J."/>
            <person name="Istrail S."/>
            <person name="Sutton G.G."/>
            <person name="Florea L."/>
            <person name="Halpern A.L."/>
            <person name="Mobarry C.M."/>
            <person name="Lippert R."/>
            <person name="Walenz B."/>
            <person name="Shatkay H."/>
            <person name="Dew I."/>
            <person name="Miller J.R."/>
            <person name="Flanigan M.J."/>
            <person name="Edwards N.J."/>
            <person name="Bolanos R."/>
            <person name="Fasulo D."/>
            <person name="Halldorsson B.V."/>
            <person name="Hannenhalli S."/>
            <person name="Turner R."/>
            <person name="Yooseph S."/>
            <person name="Lu F."/>
            <person name="Nusskern D.R."/>
            <person name="Shue B.C."/>
            <person name="Zheng X.H."/>
            <person name="Zhong F."/>
            <person name="Delcher A.L."/>
            <person name="Huson D.H."/>
            <person name="Kravitz S.A."/>
            <person name="Mouchard L."/>
            <person name="Reinert K."/>
            <person name="Remington K.A."/>
            <person name="Clark A.G."/>
            <person name="Waterman M.S."/>
            <person name="Eichler E.E."/>
            <person name="Adams M.D."/>
            <person name="Hunkapiller M.W."/>
            <person name="Myers E.W."/>
            <person name="Venter J.C."/>
        </authorList>
    </citation>
    <scope>NUCLEOTIDE SEQUENCE [LARGE SCALE GENOMIC DNA]</scope>
    <scope>VARIANT PHE-104</scope>
</reference>
<reference key="4">
    <citation type="journal article" date="2004" name="Genome Res.">
        <title>The status, quality, and expansion of the NIH full-length cDNA project: the Mammalian Gene Collection (MGC).</title>
        <authorList>
            <consortium name="The MGC Project Team"/>
        </authorList>
    </citation>
    <scope>NUCLEOTIDE SEQUENCE [LARGE SCALE MRNA]</scope>
    <scope>VARIANT PHE-104</scope>
    <source>
        <tissue>Cerebellum</tissue>
    </source>
</reference>
<reference key="5">
    <citation type="journal article" date="2004" name="Proc. Natl. Acad. Sci. U.S.A.">
        <title>The human olfactory receptor gene family.</title>
        <authorList>
            <person name="Malnic B."/>
            <person name="Godfrey P.A."/>
            <person name="Buck L.B."/>
        </authorList>
    </citation>
    <scope>IDENTIFICATION</scope>
</reference>
<reference key="6">
    <citation type="journal article" date="2004" name="Proc. Natl. Acad. Sci. U.S.A.">
        <authorList>
            <person name="Malnic B."/>
            <person name="Godfrey P.A."/>
            <person name="Buck L.B."/>
        </authorList>
    </citation>
    <scope>ERRATUM OF PUBMED:14983052</scope>
</reference>
<dbReference type="EMBL" id="AC004171">
    <property type="status" value="NOT_ANNOTATED_CDS"/>
    <property type="molecule type" value="Genomic_DNA"/>
</dbReference>
<dbReference type="EMBL" id="AL035542">
    <property type="protein sequence ID" value="CAB44510.1"/>
    <property type="molecule type" value="Genomic_DNA"/>
</dbReference>
<dbReference type="EMBL" id="AL645927">
    <property type="status" value="NOT_ANNOTATED_CDS"/>
    <property type="molecule type" value="Genomic_DNA"/>
</dbReference>
<dbReference type="EMBL" id="AL662869">
    <property type="status" value="NOT_ANNOTATED_CDS"/>
    <property type="molecule type" value="Genomic_DNA"/>
</dbReference>
<dbReference type="EMBL" id="CR759808">
    <property type="status" value="NOT_ANNOTATED_CDS"/>
    <property type="molecule type" value="Genomic_DNA"/>
</dbReference>
<dbReference type="EMBL" id="BX927232">
    <property type="status" value="NOT_ANNOTATED_CDS"/>
    <property type="molecule type" value="Genomic_DNA"/>
</dbReference>
<dbReference type="EMBL" id="CH471081">
    <property type="protein sequence ID" value="EAX03191.1"/>
    <property type="molecule type" value="Genomic_DNA"/>
</dbReference>
<dbReference type="EMBL" id="BC069123">
    <property type="protein sequence ID" value="AAH69123.1"/>
    <property type="molecule type" value="mRNA"/>
</dbReference>
<dbReference type="EMBL" id="BC101742">
    <property type="protein sequence ID" value="AAI01743.1"/>
    <property type="molecule type" value="mRNA"/>
</dbReference>
<dbReference type="EMBL" id="BC101746">
    <property type="protein sequence ID" value="AAI01747.1"/>
    <property type="molecule type" value="mRNA"/>
</dbReference>
<dbReference type="EMBL" id="BK004523">
    <property type="protein sequence ID" value="DAA04921.1"/>
    <property type="molecule type" value="Genomic_DNA"/>
</dbReference>
<dbReference type="RefSeq" id="NP_039224.2">
    <property type="nucleotide sequence ID" value="NM_013936.3"/>
</dbReference>
<dbReference type="SMR" id="P58182"/>
<dbReference type="FunCoup" id="P58182">
    <property type="interactions" value="416"/>
</dbReference>
<dbReference type="STRING" id="9606.ENSP00000485112"/>
<dbReference type="GlyCosmos" id="P58182">
    <property type="glycosylation" value="1 site, No reported glycans"/>
</dbReference>
<dbReference type="GlyGen" id="P58182">
    <property type="glycosylation" value="1 site"/>
</dbReference>
<dbReference type="iPTMnet" id="P58182"/>
<dbReference type="PhosphoSitePlus" id="P58182"/>
<dbReference type="BioMuta" id="OR12D2"/>
<dbReference type="DMDM" id="288558820"/>
<dbReference type="jPOST" id="P58182"/>
<dbReference type="PaxDb" id="9606-ENSP00000373047"/>
<dbReference type="PeptideAtlas" id="P58182"/>
<dbReference type="Antibodypedia" id="78438">
    <property type="antibodies" value="10 antibodies from 8 providers"/>
</dbReference>
<dbReference type="DNASU" id="26529"/>
<dbReference type="Ensembl" id="ENST00000377140.6">
    <property type="protein sequence ID" value="ENSP00000366345.5"/>
    <property type="gene ID" value="ENSG00000204690.6"/>
</dbReference>
<dbReference type="Ensembl" id="ENST00000414415.4">
    <property type="protein sequence ID" value="ENSP00000414137.3"/>
    <property type="gene ID" value="ENSG00000233481.4"/>
</dbReference>
<dbReference type="Ensembl" id="ENST00000438569.4">
    <property type="protein sequence ID" value="ENSP00000415065.3"/>
    <property type="gene ID" value="ENSG00000235966.4"/>
</dbReference>
<dbReference type="Ensembl" id="ENST00000623183.1">
    <property type="protein sequence ID" value="ENSP00000485112.1"/>
    <property type="gene ID" value="ENSG00000280236.3"/>
</dbReference>
<dbReference type="Ensembl" id="ENST00000642051.1">
    <property type="protein sequence ID" value="ENSP00000493463.1"/>
    <property type="gene ID" value="ENSG00000280236.3"/>
</dbReference>
<dbReference type="GeneID" id="26529"/>
<dbReference type="KEGG" id="hsa:26529"/>
<dbReference type="MANE-Select" id="ENST00000642051.1">
    <property type="protein sequence ID" value="ENSP00000493463.1"/>
    <property type="RefSeq nucleotide sequence ID" value="NM_013936.4"/>
    <property type="RefSeq protein sequence ID" value="NP_039224.2"/>
</dbReference>
<dbReference type="UCSC" id="uc003nmf.4">
    <property type="organism name" value="human"/>
</dbReference>
<dbReference type="AGR" id="HGNC:8178"/>
<dbReference type="CTD" id="26529"/>
<dbReference type="DisGeNET" id="26529"/>
<dbReference type="GeneCards" id="OR12D2"/>
<dbReference type="HGNC" id="HGNC:8178">
    <property type="gene designation" value="OR12D2"/>
</dbReference>
<dbReference type="HPA" id="ENSG00000280236">
    <property type="expression patterns" value="Not detected"/>
</dbReference>
<dbReference type="neXtProt" id="NX_P58182"/>
<dbReference type="OpenTargets" id="ENSG00000280236"/>
<dbReference type="PharmGKB" id="PA32028"/>
<dbReference type="VEuPathDB" id="HostDB:ENSG00000280236"/>
<dbReference type="eggNOG" id="ENOG502SJ1M">
    <property type="taxonomic scope" value="Eukaryota"/>
</dbReference>
<dbReference type="GeneTree" id="ENSGT00940000162974"/>
<dbReference type="HOGENOM" id="CLU_012526_1_2_1"/>
<dbReference type="InParanoid" id="P58182"/>
<dbReference type="OMA" id="AWSIGFF"/>
<dbReference type="OrthoDB" id="5967130at2759"/>
<dbReference type="PAN-GO" id="P58182">
    <property type="GO annotations" value="4 GO annotations based on evolutionary models"/>
</dbReference>
<dbReference type="PhylomeDB" id="P58182"/>
<dbReference type="TreeFam" id="TF338273"/>
<dbReference type="PathwayCommons" id="P58182"/>
<dbReference type="Reactome" id="R-HSA-9752946">
    <property type="pathway name" value="Expression and translocation of olfactory receptors"/>
</dbReference>
<dbReference type="BioGRID-ORCS" id="26529">
    <property type="hits" value="6 hits in 732 CRISPR screens"/>
</dbReference>
<dbReference type="GeneWiki" id="OR12D2"/>
<dbReference type="GenomeRNAi" id="26529"/>
<dbReference type="Pharos" id="P58182">
    <property type="development level" value="Tdark"/>
</dbReference>
<dbReference type="PRO" id="PR:P58182"/>
<dbReference type="Proteomes" id="UP000005640">
    <property type="component" value="Chromosome 6"/>
</dbReference>
<dbReference type="RNAct" id="P58182">
    <property type="molecule type" value="protein"/>
</dbReference>
<dbReference type="Bgee" id="ENSG00000280236">
    <property type="expression patterns" value="Expressed in hypothalamus and 7 other cell types or tissues"/>
</dbReference>
<dbReference type="ExpressionAtlas" id="P58182">
    <property type="expression patterns" value="baseline and differential"/>
</dbReference>
<dbReference type="GO" id="GO:0016020">
    <property type="term" value="C:membrane"/>
    <property type="evidence" value="ECO:0000318"/>
    <property type="project" value="GO_Central"/>
</dbReference>
<dbReference type="GO" id="GO:0005886">
    <property type="term" value="C:plasma membrane"/>
    <property type="evidence" value="ECO:0007669"/>
    <property type="project" value="UniProtKB-SubCell"/>
</dbReference>
<dbReference type="GO" id="GO:0004930">
    <property type="term" value="F:G protein-coupled receptor activity"/>
    <property type="evidence" value="ECO:0007669"/>
    <property type="project" value="UniProtKB-KW"/>
</dbReference>
<dbReference type="GO" id="GO:0005549">
    <property type="term" value="F:odorant binding"/>
    <property type="evidence" value="ECO:0000318"/>
    <property type="project" value="GO_Central"/>
</dbReference>
<dbReference type="GO" id="GO:0004984">
    <property type="term" value="F:olfactory receptor activity"/>
    <property type="evidence" value="ECO:0000318"/>
    <property type="project" value="GO_Central"/>
</dbReference>
<dbReference type="GO" id="GO:0050911">
    <property type="term" value="P:detection of chemical stimulus involved in sensory perception of smell"/>
    <property type="evidence" value="ECO:0000318"/>
    <property type="project" value="GO_Central"/>
</dbReference>
<dbReference type="CDD" id="cd15915">
    <property type="entry name" value="7tmA_OR12D-like"/>
    <property type="match status" value="1"/>
</dbReference>
<dbReference type="FunFam" id="1.10.1220.70:FF:000001">
    <property type="entry name" value="Olfactory receptor"/>
    <property type="match status" value="1"/>
</dbReference>
<dbReference type="FunFam" id="1.20.1070.10:FF:000001">
    <property type="entry name" value="Olfactory receptor"/>
    <property type="match status" value="1"/>
</dbReference>
<dbReference type="Gene3D" id="1.20.1070.10">
    <property type="entry name" value="Rhodopsin 7-helix transmembrane proteins"/>
    <property type="match status" value="1"/>
</dbReference>
<dbReference type="InterPro" id="IPR000276">
    <property type="entry name" value="GPCR_Rhodpsn"/>
</dbReference>
<dbReference type="InterPro" id="IPR017452">
    <property type="entry name" value="GPCR_Rhodpsn_7TM"/>
</dbReference>
<dbReference type="InterPro" id="IPR000725">
    <property type="entry name" value="Olfact_rcpt"/>
</dbReference>
<dbReference type="InterPro" id="IPR050516">
    <property type="entry name" value="Olfactory_GPCR"/>
</dbReference>
<dbReference type="PANTHER" id="PTHR26452">
    <property type="entry name" value="OLFACTORY RECEPTOR"/>
    <property type="match status" value="1"/>
</dbReference>
<dbReference type="Pfam" id="PF13853">
    <property type="entry name" value="7tm_4"/>
    <property type="match status" value="1"/>
</dbReference>
<dbReference type="PRINTS" id="PR00237">
    <property type="entry name" value="GPCRRHODOPSN"/>
</dbReference>
<dbReference type="PRINTS" id="PR00245">
    <property type="entry name" value="OLFACTORYR"/>
</dbReference>
<dbReference type="SUPFAM" id="SSF81321">
    <property type="entry name" value="Family A G protein-coupled receptor-like"/>
    <property type="match status" value="1"/>
</dbReference>
<dbReference type="PROSITE" id="PS50262">
    <property type="entry name" value="G_PROTEIN_RECEP_F1_2"/>
    <property type="match status" value="1"/>
</dbReference>
<feature type="chain" id="PRO_0000150728" description="Olfactory receptor 12D2">
    <location>
        <begin position="1"/>
        <end position="307"/>
    </location>
</feature>
<feature type="topological domain" description="Extracellular" evidence="1">
    <location>
        <begin position="1"/>
        <end position="23"/>
    </location>
</feature>
<feature type="transmembrane region" description="Helical; Name=1" evidence="1">
    <location>
        <begin position="24"/>
        <end position="44"/>
    </location>
</feature>
<feature type="topological domain" description="Cytoplasmic" evidence="1">
    <location>
        <begin position="45"/>
        <end position="52"/>
    </location>
</feature>
<feature type="transmembrane region" description="Helical; Name=2" evidence="1">
    <location>
        <begin position="53"/>
        <end position="73"/>
    </location>
</feature>
<feature type="topological domain" description="Extracellular" evidence="1">
    <location>
        <begin position="74"/>
        <end position="97"/>
    </location>
</feature>
<feature type="transmembrane region" description="Helical; Name=3" evidence="1">
    <location>
        <begin position="98"/>
        <end position="118"/>
    </location>
</feature>
<feature type="topological domain" description="Cytoplasmic" evidence="1">
    <location>
        <begin position="119"/>
        <end position="137"/>
    </location>
</feature>
<feature type="transmembrane region" description="Helical; Name=4" evidence="1">
    <location>
        <begin position="138"/>
        <end position="158"/>
    </location>
</feature>
<feature type="topological domain" description="Extracellular" evidence="1">
    <location>
        <begin position="159"/>
        <end position="195"/>
    </location>
</feature>
<feature type="transmembrane region" description="Helical; Name=5" evidence="1">
    <location>
        <begin position="196"/>
        <end position="215"/>
    </location>
</feature>
<feature type="topological domain" description="Cytoplasmic" evidence="1">
    <location>
        <begin position="216"/>
        <end position="236"/>
    </location>
</feature>
<feature type="transmembrane region" description="Helical; Name=6" evidence="1">
    <location>
        <begin position="237"/>
        <end position="257"/>
    </location>
</feature>
<feature type="topological domain" description="Extracellular" evidence="1">
    <location>
        <begin position="258"/>
        <end position="270"/>
    </location>
</feature>
<feature type="transmembrane region" description="Helical; Name=7" evidence="1">
    <location>
        <begin position="271"/>
        <end position="291"/>
    </location>
</feature>
<feature type="topological domain" description="Cytoplasmic" evidence="1">
    <location>
        <begin position="292"/>
        <end position="307"/>
    </location>
</feature>
<feature type="glycosylation site" description="N-linked (GlcNAc...) asparagine" evidence="1">
    <location>
        <position position="3"/>
    </location>
</feature>
<feature type="disulfide bond" evidence="2">
    <location>
        <begin position="95"/>
        <end position="187"/>
    </location>
</feature>
<feature type="sequence variant" id="VAR_057569" description="In dbSNP:rs9257834.">
    <original>V</original>
    <variation>F</variation>
    <location>
        <position position="47"/>
    </location>
</feature>
<feature type="sequence variant" id="VAR_057570" description="In dbSNP:rs4987411.">
    <original>L</original>
    <variation>P</variation>
    <location>
        <position position="56"/>
    </location>
</feature>
<feature type="sequence variant" id="VAR_058967" description="In dbSNP:rs3128853." evidence="3 4 5 6">
    <original>S</original>
    <variation>F</variation>
    <location>
        <position position="104"/>
    </location>
</feature>
<feature type="sequence variant" id="VAR_057571" description="In dbSNP:rs2073154.">
    <original>F</original>
    <variation>L</variation>
    <location>
        <position position="113"/>
    </location>
</feature>
<feature type="sequence variant" id="VAR_057572" description="In dbSNP:rs2073153.">
    <original>L</original>
    <variation>R</variation>
    <location>
        <position position="120"/>
    </location>
</feature>
<feature type="sequence variant" id="VAR_057573" description="In dbSNP:rs2073152.">
    <original>S</original>
    <variation>C</variation>
    <location>
        <position position="121"/>
    </location>
</feature>
<feature type="sequence variant" id="VAR_057574" description="In dbSNP:rs11752608.">
    <original>V</original>
    <variation>G</variation>
    <location>
        <position position="132"/>
    </location>
</feature>
<feature type="sequence variant" id="VAR_057575" description="In dbSNP:rs2073151.">
    <original>V</original>
    <variation>I</variation>
    <location>
        <position position="159"/>
    </location>
</feature>
<name>O12D2_HUMAN</name>
<protein>
    <recommendedName>
        <fullName>Olfactory receptor 12D2</fullName>
    </recommendedName>
    <alternativeName>
        <fullName>Hs6M1-20</fullName>
    </alternativeName>
    <alternativeName>
        <fullName>Olfactory receptor OR6-28</fullName>
    </alternativeName>
</protein>
<comment type="function">
    <text evidence="7">Odorant receptor.</text>
</comment>
<comment type="subcellular location">
    <subcellularLocation>
        <location>Cell membrane</location>
        <topology>Multi-pass membrane protein</topology>
    </subcellularLocation>
</comment>
<comment type="similarity">
    <text evidence="2">Belongs to the G-protein coupled receptor 1 family.</text>
</comment>
<comment type="online information" name="Human Olfactory Receptor Data Exploratorium (HORDE)">
    <link uri="http://genome.weizmann.ac.il/horde/card/index/symbol:OR12D2"/>
</comment>
<organism>
    <name type="scientific">Homo sapiens</name>
    <name type="common">Human</name>
    <dbReference type="NCBI Taxonomy" id="9606"/>
    <lineage>
        <taxon>Eukaryota</taxon>
        <taxon>Metazoa</taxon>
        <taxon>Chordata</taxon>
        <taxon>Craniata</taxon>
        <taxon>Vertebrata</taxon>
        <taxon>Euteleostomi</taxon>
        <taxon>Mammalia</taxon>
        <taxon>Eutheria</taxon>
        <taxon>Euarchontoglires</taxon>
        <taxon>Primates</taxon>
        <taxon>Haplorrhini</taxon>
        <taxon>Catarrhini</taxon>
        <taxon>Hominidae</taxon>
        <taxon>Homo</taxon>
    </lineage>
</organism>
<sequence length="307" mass="34813">MLNTTSVTEFLLLGVTDIQELQPFLFVVFLTIYFISVTGNGAVLMIVISDPRLHSLMYFFLGNLSYLDICYSTVTLPKMLQNFLSTHKAISFLGCISQLHFFHSLGSTESMLFAVMAFDLSVAICKPLRYTVIMNPQLCTQMAITIWVIGFFHALLHSVMTSRLNFCGSNRIHHFLCDIKPLLKLACGNTELNQWLLSTVTGTIAMGPFFLTLLSYFYIITYLFFKTRSCSMLCKALSTCASHFMVVILFYAPVLFTYIHPALESFMDQDRIVAIMYTVVTPVLNPLIYTLRNKEVKGALGRVIRRL</sequence>